<evidence type="ECO:0000250" key="1"/>
<evidence type="ECO:0000250" key="2">
    <source>
        <dbReference type="UniProtKB" id="P07750"/>
    </source>
</evidence>
<evidence type="ECO:0000255" key="3"/>
<evidence type="ECO:0000305" key="4"/>
<protein>
    <recommendedName>
        <fullName>Interleukin-4</fullName>
        <shortName>IL-4</shortName>
    </recommendedName>
    <alternativeName>
        <fullName>B-cell stimulatory factor 1</fullName>
        <shortName>BSF-1</shortName>
    </alternativeName>
    <alternativeName>
        <fullName>Lymphocyte stimulatory factor 1</fullName>
    </alternativeName>
</protein>
<organism>
    <name type="scientific">Ailuropoda melanoleuca</name>
    <name type="common">Giant panda</name>
    <dbReference type="NCBI Taxonomy" id="9646"/>
    <lineage>
        <taxon>Eukaryota</taxon>
        <taxon>Metazoa</taxon>
        <taxon>Chordata</taxon>
        <taxon>Craniata</taxon>
        <taxon>Vertebrata</taxon>
        <taxon>Euteleostomi</taxon>
        <taxon>Mammalia</taxon>
        <taxon>Eutheria</taxon>
        <taxon>Laurasiatheria</taxon>
        <taxon>Carnivora</taxon>
        <taxon>Caniformia</taxon>
        <taxon>Ursidae</taxon>
        <taxon>Ailuropoda</taxon>
    </lineage>
</organism>
<accession>Q3S4V6</accession>
<accession>Q0MS73</accession>
<comment type="function">
    <text evidence="2">Participates in at least several B-cell activation processes as well as of other cell types. It is a costimulator of DNA-synthesis. It induces the expression of class II MHC molecules on resting B-cells. It enhances both secretion and cell surface expression of IgE and IgG1. It also regulates the expression of the low affinity Fc receptor for IgE (CD23) on both lymphocytes and monocytes. Positively regulates IL31RA expression in macrophages. Stimulates autophagy in dendritic cells by interfering with mTORC1 signaling and through the induction of RUFY4.</text>
</comment>
<comment type="subcellular location">
    <subcellularLocation>
        <location>Secreted</location>
    </subcellularLocation>
</comment>
<comment type="similarity">
    <text evidence="4">Belongs to the IL-4/IL-13 family.</text>
</comment>
<name>IL4_AILME</name>
<sequence>MGLTSQLIPTLVCLLALTSTFVHGHNFNITIKEIIKTLNILTARNDTCMELTVTNIFAAPKNTTDTETFCRATTVLQQLSTHSCSNKLLGGLHRNLKTMANMTCSVNEVKKSTLRDFLERLKAIVQRKYYRH</sequence>
<gene>
    <name type="primary">IL4</name>
</gene>
<reference key="1">
    <citation type="submission" date="2005-08" db="EMBL/GenBank/DDBJ databases">
        <title>Molecular cloning and expression of interleukin 4 from giant panda.</title>
        <authorList>
            <person name="Wu Z."/>
            <person name="Xu L."/>
            <person name="Zhang S."/>
            <person name="Zou F."/>
            <person name="Yue B."/>
            <person name="Zhang Z."/>
            <person name="Zeng B."/>
        </authorList>
    </citation>
    <scope>NUCLEOTIDE SEQUENCE [MRNA]</scope>
</reference>
<reference key="2">
    <citation type="submission" date="2006-07" db="EMBL/GenBank/DDBJ databases">
        <title>Cloning and sequence analysis of IL-4 gene in Ailuropoda melanoleuca.</title>
        <authorList>
            <person name="Huang D."/>
            <person name="Yang G."/>
            <person name="Zhang Z."/>
            <person name="Zhang A."/>
            <person name="Guo W."/>
            <person name="Hou R."/>
            <person name="Wang C."/>
            <person name="Shen F."/>
        </authorList>
    </citation>
    <scope>NUCLEOTIDE SEQUENCE [MRNA]</scope>
</reference>
<proteinExistence type="evidence at transcript level"/>
<feature type="signal peptide" evidence="1">
    <location>
        <begin position="1"/>
        <end position="24"/>
    </location>
</feature>
<feature type="chain" id="PRO_0000042904" description="Interleukin-4">
    <location>
        <begin position="25"/>
        <end position="132"/>
    </location>
</feature>
<feature type="glycosylation site" description="N-linked (GlcNAc...) asparagine" evidence="3">
    <location>
        <position position="28"/>
    </location>
</feature>
<feature type="glycosylation site" description="N-linked (GlcNAc...) asparagine" evidence="3">
    <location>
        <position position="45"/>
    </location>
</feature>
<feature type="glycosylation site" description="N-linked (GlcNAc...) asparagine" evidence="3">
    <location>
        <position position="62"/>
    </location>
</feature>
<feature type="glycosylation site" description="N-linked (GlcNAc...) asparagine" evidence="3">
    <location>
        <position position="101"/>
    </location>
</feature>
<feature type="disulfide bond" evidence="1">
    <location>
        <begin position="48"/>
        <end position="84"/>
    </location>
</feature>
<feature type="disulfide bond" evidence="1">
    <location>
        <begin position="70"/>
        <end position="104"/>
    </location>
</feature>
<feature type="sequence conflict" description="In Ref. 2; ABH10825." evidence="4" ref="2">
    <original>G</original>
    <variation>C</variation>
    <location>
        <position position="2"/>
    </location>
</feature>
<dbReference type="EMBL" id="DQ166512">
    <property type="protein sequence ID" value="AAZ94160.1"/>
    <property type="molecule type" value="mRNA"/>
</dbReference>
<dbReference type="EMBL" id="DQ852340">
    <property type="protein sequence ID" value="ABH10825.1"/>
    <property type="molecule type" value="mRNA"/>
</dbReference>
<dbReference type="RefSeq" id="NP_001291840.1">
    <property type="nucleotide sequence ID" value="NM_001304911.1"/>
</dbReference>
<dbReference type="SMR" id="Q3S4V6"/>
<dbReference type="FunCoup" id="Q3S4V6">
    <property type="interactions" value="72"/>
</dbReference>
<dbReference type="STRING" id="9646.ENSAMEP00000018721"/>
<dbReference type="GlyCosmos" id="Q3S4V6">
    <property type="glycosylation" value="4 sites, No reported glycans"/>
</dbReference>
<dbReference type="Ensembl" id="ENSAMET00000019474.2">
    <property type="protein sequence ID" value="ENSAMEP00000018724.2"/>
    <property type="gene ID" value="ENSAMEG00000017724.2"/>
</dbReference>
<dbReference type="GeneID" id="100482473"/>
<dbReference type="KEGG" id="aml:100482473"/>
<dbReference type="CTD" id="3565"/>
<dbReference type="GeneTree" id="ENSGT00390000013108"/>
<dbReference type="InParanoid" id="Q3S4V6"/>
<dbReference type="OrthoDB" id="9528087at2759"/>
<dbReference type="Proteomes" id="UP000008912">
    <property type="component" value="Unassembled WGS sequence"/>
</dbReference>
<dbReference type="GO" id="GO:0005615">
    <property type="term" value="C:extracellular space"/>
    <property type="evidence" value="ECO:0007669"/>
    <property type="project" value="UniProtKB-KW"/>
</dbReference>
<dbReference type="GO" id="GO:0005125">
    <property type="term" value="F:cytokine activity"/>
    <property type="evidence" value="ECO:0007669"/>
    <property type="project" value="UniProtKB-KW"/>
</dbReference>
<dbReference type="GO" id="GO:0008083">
    <property type="term" value="F:growth factor activity"/>
    <property type="evidence" value="ECO:0007669"/>
    <property type="project" value="UniProtKB-KW"/>
</dbReference>
<dbReference type="GO" id="GO:0005136">
    <property type="term" value="F:interleukin-4 receptor binding"/>
    <property type="evidence" value="ECO:0007669"/>
    <property type="project" value="InterPro"/>
</dbReference>
<dbReference type="GO" id="GO:0042113">
    <property type="term" value="P:B cell activation"/>
    <property type="evidence" value="ECO:0007669"/>
    <property type="project" value="UniProtKB-KW"/>
</dbReference>
<dbReference type="GO" id="GO:0006955">
    <property type="term" value="P:immune response"/>
    <property type="evidence" value="ECO:0007669"/>
    <property type="project" value="InterPro"/>
</dbReference>
<dbReference type="GO" id="GO:0035771">
    <property type="term" value="P:interleukin-4-mediated signaling pathway"/>
    <property type="evidence" value="ECO:0007669"/>
    <property type="project" value="TreeGrafter"/>
</dbReference>
<dbReference type="GO" id="GO:0050728">
    <property type="term" value="P:negative regulation of inflammatory response"/>
    <property type="evidence" value="ECO:0007669"/>
    <property type="project" value="TreeGrafter"/>
</dbReference>
<dbReference type="GO" id="GO:0045893">
    <property type="term" value="P:positive regulation of DNA-templated transcription"/>
    <property type="evidence" value="ECO:0007669"/>
    <property type="project" value="TreeGrafter"/>
</dbReference>
<dbReference type="GO" id="GO:0016239">
    <property type="term" value="P:positive regulation of macroautophagy"/>
    <property type="evidence" value="ECO:0000250"/>
    <property type="project" value="UniProtKB"/>
</dbReference>
<dbReference type="GO" id="GO:0050776">
    <property type="term" value="P:regulation of immune response"/>
    <property type="evidence" value="ECO:0007669"/>
    <property type="project" value="TreeGrafter"/>
</dbReference>
<dbReference type="FunFam" id="1.20.1250.10:FF:000014">
    <property type="entry name" value="Interleukin-4"/>
    <property type="match status" value="1"/>
</dbReference>
<dbReference type="Gene3D" id="1.20.1250.10">
    <property type="match status" value="1"/>
</dbReference>
<dbReference type="InterPro" id="IPR009079">
    <property type="entry name" value="4_helix_cytokine-like_core"/>
</dbReference>
<dbReference type="InterPro" id="IPR002354">
    <property type="entry name" value="IL-4"/>
</dbReference>
<dbReference type="InterPro" id="IPR001325">
    <property type="entry name" value="IL-4/IL-13"/>
</dbReference>
<dbReference type="InterPro" id="IPR018096">
    <property type="entry name" value="IL-4/IL-13_CS"/>
</dbReference>
<dbReference type="PANTHER" id="PTHR47401">
    <property type="entry name" value="INTERLEUKIN-4"/>
    <property type="match status" value="1"/>
</dbReference>
<dbReference type="PANTHER" id="PTHR47401:SF1">
    <property type="entry name" value="INTERLEUKIN-4"/>
    <property type="match status" value="1"/>
</dbReference>
<dbReference type="Pfam" id="PF00727">
    <property type="entry name" value="IL4"/>
    <property type="match status" value="1"/>
</dbReference>
<dbReference type="PIRSF" id="PIRSF001941">
    <property type="entry name" value="Interleukin_4"/>
    <property type="match status" value="1"/>
</dbReference>
<dbReference type="PRINTS" id="PR00431">
    <property type="entry name" value="INTERLEUKIN4"/>
</dbReference>
<dbReference type="SMART" id="SM00190">
    <property type="entry name" value="IL4_13"/>
    <property type="match status" value="1"/>
</dbReference>
<dbReference type="SUPFAM" id="SSF47266">
    <property type="entry name" value="4-helical cytokines"/>
    <property type="match status" value="1"/>
</dbReference>
<dbReference type="PROSITE" id="PS00838">
    <property type="entry name" value="INTERLEUKIN_4_13"/>
    <property type="match status" value="1"/>
</dbReference>
<keyword id="KW-0075">B-cell activation</keyword>
<keyword id="KW-0202">Cytokine</keyword>
<keyword id="KW-1015">Disulfide bond</keyword>
<keyword id="KW-0325">Glycoprotein</keyword>
<keyword id="KW-0339">Growth factor</keyword>
<keyword id="KW-1185">Reference proteome</keyword>
<keyword id="KW-0964">Secreted</keyword>
<keyword id="KW-0732">Signal</keyword>